<organism>
    <name type="scientific">Sus scrofa</name>
    <name type="common">Pig</name>
    <dbReference type="NCBI Taxonomy" id="9823"/>
    <lineage>
        <taxon>Eukaryota</taxon>
        <taxon>Metazoa</taxon>
        <taxon>Chordata</taxon>
        <taxon>Craniata</taxon>
        <taxon>Vertebrata</taxon>
        <taxon>Euteleostomi</taxon>
        <taxon>Mammalia</taxon>
        <taxon>Eutheria</taxon>
        <taxon>Laurasiatheria</taxon>
        <taxon>Artiodactyla</taxon>
        <taxon>Suina</taxon>
        <taxon>Suidae</taxon>
        <taxon>Sus</taxon>
    </lineage>
</organism>
<keyword id="KW-0165">Cleavage on pair of basic residues</keyword>
<keyword id="KW-0903">Direct protein sequencing</keyword>
<keyword id="KW-0372">Hormone</keyword>
<keyword id="KW-1185">Reference proteome</keyword>
<keyword id="KW-0964">Secreted</keyword>
<keyword id="KW-0732">Signal</keyword>
<reference key="1">
    <citation type="journal article" date="1988" name="Mol. Endocrinol.">
        <title>Characterization of complementary deoxyribonucleic acid for precursor of porcine motilin.</title>
        <authorList>
            <person name="Bond C.T."/>
            <person name="Nilaver G."/>
            <person name="Godfrey B."/>
            <person name="Zimmerman E.A."/>
            <person name="Adelman J.P."/>
        </authorList>
    </citation>
    <scope>NUCLEOTIDE SEQUENCE [MRNA]</scope>
</reference>
<reference key="2">
    <citation type="submission" date="2006-01" db="EMBL/GenBank/DDBJ databases">
        <title>Two SNP found in motilin in China Meishan pig.</title>
        <authorList>
            <person name="Ying M."/>
            <person name="Yang Z."/>
        </authorList>
    </citation>
    <scope>NUCLEOTIDE SEQUENCE [MRNA]</scope>
</reference>
<reference key="3">
    <citation type="submission" date="2006-05" db="EMBL/GenBank/DDBJ databases">
        <title>Sequencing and chromosome mapping of pig ghrelin and motilin genes.</title>
        <authorList>
            <person name="Ying M."/>
            <person name="Yang Z."/>
        </authorList>
    </citation>
    <scope>NUCLEOTIDE SEQUENCE [GENOMIC DNA]</scope>
</reference>
<reference key="4">
    <citation type="journal article" date="1973" name="Can. J. Biochem.">
        <title>Motilin, a gastric motor activity stimulating polypeptide: the complete amino acid sequence.</title>
        <authorList>
            <person name="Brown J.C."/>
            <person name="Cook M.A."/>
            <person name="Dryburgh J.R."/>
        </authorList>
    </citation>
    <scope>PROTEIN SEQUENCE OF 26-47</scope>
</reference>
<reference key="5">
    <citation type="journal article" date="1974" name="Can. J. Biochem.">
        <title>Correction to the amino acid sequence of porcine motilin.</title>
        <authorList>
            <person name="Schubert H."/>
            <person name="Brown J.C."/>
        </authorList>
    </citation>
    <scope>SEQUENCE REVISION</scope>
</reference>
<reference key="6">
    <citation type="journal article" date="1975" name="J. Chem. Soc. Chem. Commun.">
        <authorList>
            <person name="Yajima H."/>
            <person name="Kai Y."/>
            <person name="Kawatani H."/>
        </authorList>
    </citation>
    <scope>SYNTHESIS</scope>
</reference>
<reference key="7">
    <citation type="journal article" date="1971" name="Can. J. Physiol. Pharmacol.">
        <title>The further purification of motilin, a gastric motor activity stimulating polypeptide from the mucosa of the small intestine of hogs.</title>
        <authorList>
            <person name="Brown J.C."/>
            <person name="Mutt V."/>
            <person name="Dryburgh J.R."/>
        </authorList>
    </citation>
    <scope>FUNCTION</scope>
</reference>
<reference key="8">
    <citation type="journal article" date="1990" name="Biochemistry">
        <title>Sequence-specific 1H NMR assignments and secondary structure of porcine motilin.</title>
        <authorList>
            <person name="Khan N."/>
            <person name="Graslund A."/>
            <person name="Ehrenberg A."/>
            <person name="Shriver J."/>
        </authorList>
    </citation>
    <scope>STRUCTURE BY NMR OF 26-47</scope>
</reference>
<reference key="9">
    <citation type="journal article" date="1991" name="Biochemistry">
        <title>The solution structure of motilin from NMR distance constraints, distance geometry, molecular dynamics, and an iterative full relaxation matrix refinement.</title>
        <authorList>
            <person name="Edmondson S."/>
            <person name="Khan N."/>
            <person name="Shriver J."/>
            <person name="Zdunek J."/>
            <person name="Graslund A."/>
        </authorList>
    </citation>
    <scope>STRUCTURE BY NMR OF 26-47</scope>
</reference>
<name>MOTI_PIG</name>
<evidence type="ECO:0000256" key="1">
    <source>
        <dbReference type="SAM" id="MobiDB-lite"/>
    </source>
</evidence>
<evidence type="ECO:0000269" key="2">
    <source>
    </source>
</evidence>
<evidence type="ECO:0000269" key="3">
    <source>
    </source>
</evidence>
<evidence type="ECO:0000305" key="4"/>
<comment type="function">
    <text evidence="3">Plays an important role in the regulation of interdigestive gastrointestinal motility and indirectly causes rhythmic contraction of duodenal and colonic smooth muscle.</text>
</comment>
<comment type="subcellular location">
    <subcellularLocation>
        <location>Secreted</location>
    </subcellularLocation>
</comment>
<comment type="similarity">
    <text evidence="4">Belongs to the motilin family.</text>
</comment>
<accession>P01307</accession>
<accession>A5X8W5</accession>
<accession>Q2I0F9</accession>
<sequence>MVSRKAVVVLLVVHAAAMLASHTEAFVPIFTYGELQRMQEKERNKGQKKSLSVQQASEELGPLDPSEPTKEEERVVIKLLAPVDIGIRMDSRQLEKYRATLERLLGQAPQSTQNQNAAK</sequence>
<protein>
    <recommendedName>
        <fullName>Promotilin</fullName>
    </recommendedName>
    <component>
        <recommendedName>
            <fullName>Motilin</fullName>
        </recommendedName>
    </component>
    <component>
        <recommendedName>
            <fullName>Motilin-associated peptide</fullName>
            <shortName>MAP</shortName>
        </recommendedName>
    </component>
</protein>
<proteinExistence type="evidence at protein level"/>
<gene>
    <name type="primary">MLN</name>
</gene>
<feature type="signal peptide" evidence="2">
    <location>
        <begin position="1"/>
        <end position="25"/>
    </location>
</feature>
<feature type="chain" id="PRO_0000342173" description="Promotilin">
    <location>
        <begin position="26"/>
        <end position="119"/>
    </location>
</feature>
<feature type="peptide" id="PRO_0000019188" description="Motilin">
    <location>
        <begin position="26"/>
        <end position="47"/>
    </location>
</feature>
<feature type="peptide" id="PRO_0000019189" description="Motilin-associated peptide">
    <location>
        <begin position="50"/>
        <end position="119"/>
    </location>
</feature>
<feature type="region of interest" description="Disordered" evidence="1">
    <location>
        <begin position="40"/>
        <end position="72"/>
    </location>
</feature>
<feature type="sequence conflict" description="In Ref. 1; AAA31088 and 3; ABG23101." evidence="4" ref="1 3">
    <original>I</original>
    <variation>S</variation>
    <location>
        <position position="29"/>
    </location>
</feature>
<feature type="sequence conflict" description="In Ref. 2; ABC94729." evidence="4" ref="2">
    <original>R</original>
    <variation>G</variation>
    <location>
        <position position="103"/>
    </location>
</feature>
<dbReference type="EMBL" id="M31219">
    <property type="protein sequence ID" value="AAA31088.1"/>
    <property type="molecule type" value="mRNA"/>
</dbReference>
<dbReference type="EMBL" id="DQ355970">
    <property type="protein sequence ID" value="ABC94729.1"/>
    <property type="molecule type" value="mRNA"/>
</dbReference>
<dbReference type="EMBL" id="DQ663494">
    <property type="protein sequence ID" value="ABG23101.1"/>
    <property type="molecule type" value="Genomic_DNA"/>
</dbReference>
<dbReference type="PIR" id="A40932">
    <property type="entry name" value="MSPG"/>
</dbReference>
<dbReference type="RefSeq" id="NP_999400.1">
    <property type="nucleotide sequence ID" value="NM_214235.1"/>
</dbReference>
<dbReference type="RefSeq" id="XP_013833249.1">
    <property type="nucleotide sequence ID" value="XM_013977795.1"/>
</dbReference>
<dbReference type="RefSeq" id="XP_013833250.1">
    <property type="nucleotide sequence ID" value="XM_013977796.1"/>
</dbReference>
<dbReference type="BMRB" id="P01307"/>
<dbReference type="SMR" id="P01307"/>
<dbReference type="FunCoup" id="P01307">
    <property type="interactions" value="32"/>
</dbReference>
<dbReference type="STRING" id="9823.ENSSSCP00000063874"/>
<dbReference type="PaxDb" id="9823-ENSSSCP00000001650"/>
<dbReference type="GeneID" id="397466"/>
<dbReference type="KEGG" id="ssc:397466"/>
<dbReference type="CTD" id="4295"/>
<dbReference type="eggNOG" id="ENOG502SS7F">
    <property type="taxonomic scope" value="Eukaryota"/>
</dbReference>
<dbReference type="HOGENOM" id="CLU_154278_0_0_1"/>
<dbReference type="InParanoid" id="P01307"/>
<dbReference type="OrthoDB" id="9937685at2759"/>
<dbReference type="TreeFam" id="TF336217"/>
<dbReference type="Proteomes" id="UP000008227">
    <property type="component" value="Unplaced"/>
</dbReference>
<dbReference type="Proteomes" id="UP000314985">
    <property type="component" value="Unplaced"/>
</dbReference>
<dbReference type="Proteomes" id="UP000694570">
    <property type="component" value="Unplaced"/>
</dbReference>
<dbReference type="Proteomes" id="UP000694571">
    <property type="component" value="Unplaced"/>
</dbReference>
<dbReference type="Proteomes" id="UP000694720">
    <property type="component" value="Unplaced"/>
</dbReference>
<dbReference type="Proteomes" id="UP000694722">
    <property type="component" value="Unplaced"/>
</dbReference>
<dbReference type="Proteomes" id="UP000694723">
    <property type="component" value="Unplaced"/>
</dbReference>
<dbReference type="Proteomes" id="UP000694724">
    <property type="component" value="Unplaced"/>
</dbReference>
<dbReference type="Proteomes" id="UP000694725">
    <property type="component" value="Unplaced"/>
</dbReference>
<dbReference type="Proteomes" id="UP000694726">
    <property type="component" value="Unplaced"/>
</dbReference>
<dbReference type="Proteomes" id="UP000694727">
    <property type="component" value="Unplaced"/>
</dbReference>
<dbReference type="Proteomes" id="UP000694728">
    <property type="component" value="Unplaced"/>
</dbReference>
<dbReference type="GO" id="GO:0005576">
    <property type="term" value="C:extracellular region"/>
    <property type="evidence" value="ECO:0007669"/>
    <property type="project" value="UniProtKB-SubCell"/>
</dbReference>
<dbReference type="GO" id="GO:0005179">
    <property type="term" value="F:hormone activity"/>
    <property type="evidence" value="ECO:0007669"/>
    <property type="project" value="UniProtKB-KW"/>
</dbReference>
<dbReference type="GO" id="GO:0031788">
    <property type="term" value="F:motilin receptor binding"/>
    <property type="evidence" value="ECO:0000318"/>
    <property type="project" value="GO_Central"/>
</dbReference>
<dbReference type="InterPro" id="IPR006737">
    <property type="entry name" value="Motilin_assoc"/>
</dbReference>
<dbReference type="InterPro" id="IPR006738">
    <property type="entry name" value="Motilin_ghrelin"/>
</dbReference>
<dbReference type="InterPro" id="IPR015662">
    <property type="entry name" value="Promotilin"/>
</dbReference>
<dbReference type="PANTHER" id="PTHR14156">
    <property type="entry name" value="MOTILIN"/>
    <property type="match status" value="1"/>
</dbReference>
<dbReference type="PANTHER" id="PTHR14156:SF0">
    <property type="entry name" value="PROMOTILIN"/>
    <property type="match status" value="1"/>
</dbReference>
<dbReference type="Pfam" id="PF04643">
    <property type="entry name" value="Motilin_assoc"/>
    <property type="match status" value="1"/>
</dbReference>
<dbReference type="Pfam" id="PF04644">
    <property type="entry name" value="Motilin_ghrelin"/>
    <property type="match status" value="1"/>
</dbReference>